<comment type="function">
    <text evidence="1 2">Acts as a suppressor component of the dual wtf meiotic drive system, and can suppress but not confer meiotic drive by compatible poisons (By similarity). Wtf meiotic drive systems promote unequal transmission of alleles from the parental zygote to progeny spores by encoding a poison and an antidote from the same locus; the poison is trans-acting and forms toxic aggregates in all spores within an ascus, wherease the antidote is spore-specific and targets aggregates for degradation by the vacuole (By similarity). Meiotic drive by wtf systems therefore lead to poisoning of all progeny that do not inherit the dual poison/antidote allele, or express a compatible antidote (By similarity).</text>
</comment>
<comment type="subunit">
    <text evidence="1 3">Homomer (By similarity). Interacts with other proteins that exhibit high sequence similarity (By similarity).</text>
</comment>
<comment type="subcellular location">
    <subcellularLocation>
        <location evidence="1 4">Spore membrane</location>
        <topology evidence="4">Multi-pass membrane protein</topology>
    </subcellularLocation>
    <subcellularLocation>
        <location evidence="1 4">Vacuole membrane</location>
        <topology evidence="4">Multi-pass membrane protein</topology>
    </subcellularLocation>
</comment>
<comment type="similarity">
    <text evidence="6">Belongs to the WTF family.</text>
</comment>
<dbReference type="EMBL" id="CU329672">
    <property type="protein sequence ID" value="CAA20704.1"/>
    <property type="molecule type" value="Genomic_DNA"/>
</dbReference>
<dbReference type="PIR" id="T41669">
    <property type="entry name" value="T41669"/>
</dbReference>
<dbReference type="RefSeq" id="NP_587844.1">
    <property type="nucleotide sequence ID" value="NM_001022837.2"/>
</dbReference>
<dbReference type="SMR" id="O74564"/>
<dbReference type="STRING" id="284812.O74564"/>
<dbReference type="PaxDb" id="4896-SPCC970.11c.1"/>
<dbReference type="EnsemblFungi" id="SPCC970.11c.1">
    <property type="protein sequence ID" value="SPCC970.11c.1:pep"/>
    <property type="gene ID" value="SPCC970.11c"/>
</dbReference>
<dbReference type="GeneID" id="2539347"/>
<dbReference type="KEGG" id="spo:2539347"/>
<dbReference type="PomBase" id="SPCC970.11c">
    <property type="gene designation" value="wtf9"/>
</dbReference>
<dbReference type="VEuPathDB" id="FungiDB:SPCC970.11c"/>
<dbReference type="HOGENOM" id="CLU_763247_0_0_1"/>
<dbReference type="InParanoid" id="O74564"/>
<dbReference type="PhylomeDB" id="O74564"/>
<dbReference type="PRO" id="PR:O74564"/>
<dbReference type="Proteomes" id="UP000002485">
    <property type="component" value="Chromosome III"/>
</dbReference>
<dbReference type="GO" id="GO:0005737">
    <property type="term" value="C:cytoplasm"/>
    <property type="evidence" value="ECO:0000250"/>
    <property type="project" value="PomBase"/>
</dbReference>
<dbReference type="GO" id="GO:0005774">
    <property type="term" value="C:vacuolar membrane"/>
    <property type="evidence" value="ECO:0007669"/>
    <property type="project" value="UniProtKB-SubCell"/>
</dbReference>
<dbReference type="GO" id="GO:0110134">
    <property type="term" value="P:meiotic drive"/>
    <property type="evidence" value="ECO:0000255"/>
    <property type="project" value="PomBase"/>
</dbReference>
<dbReference type="InterPro" id="IPR004982">
    <property type="entry name" value="WTF"/>
</dbReference>
<dbReference type="Pfam" id="PF03303">
    <property type="entry name" value="WTF"/>
    <property type="match status" value="1"/>
</dbReference>
<organism>
    <name type="scientific">Schizosaccharomyces pombe (strain 972 / ATCC 24843)</name>
    <name type="common">Fission yeast</name>
    <dbReference type="NCBI Taxonomy" id="284812"/>
    <lineage>
        <taxon>Eukaryota</taxon>
        <taxon>Fungi</taxon>
        <taxon>Dikarya</taxon>
        <taxon>Ascomycota</taxon>
        <taxon>Taphrinomycotina</taxon>
        <taxon>Schizosaccharomycetes</taxon>
        <taxon>Schizosaccharomycetales</taxon>
        <taxon>Schizosaccharomycetaceae</taxon>
        <taxon>Schizosaccharomyces</taxon>
    </lineage>
</organism>
<keyword id="KW-0472">Membrane</keyword>
<keyword id="KW-1185">Reference proteome</keyword>
<keyword id="KW-0812">Transmembrane</keyword>
<keyword id="KW-1133">Transmembrane helix</keyword>
<keyword id="KW-0926">Vacuole</keyword>
<proteinExistence type="inferred from homology"/>
<protein>
    <recommendedName>
        <fullName>Meiotic drive suppressor wtf9</fullName>
    </recommendedName>
</protein>
<name>WTF9_SCHPO</name>
<sequence>MKNNYTSLKSPLDEEDELKTDHEIDLEKGPLPEYDSEEEGALPPYSDHALVNNPPNTHRENHSSGTTDNSSPLLIKLLISFTSIILFNAPAVCYLKYKDAFFKNYGAVEWTLFGFWCFVCTLALIFLTYFYETWTKAVKVTVISLAQCVKVTAVFLAKCVKVTAVGLYNSREKWVVIIWLLWVVICYTLFLRAKFGNLNLDKALICSTCSISAALLLFLLYVRLPFWTLKHMFSGLFQVLGVQSCVVIVQKGLMHLFDKHIDGTGYEIEASSLFVIGNFLFFYEMECPGALKRMPKFIRNGIASFLGGIANAIGGANDNNDIPLEETEAESEV</sequence>
<feature type="chain" id="PRO_0000193224" description="Meiotic drive suppressor wtf9">
    <location>
        <begin position="1"/>
        <end position="333"/>
    </location>
</feature>
<feature type="transmembrane region" description="Helical" evidence="4">
    <location>
        <begin position="73"/>
        <end position="95"/>
    </location>
</feature>
<feature type="transmembrane region" description="Helical" evidence="4">
    <location>
        <begin position="108"/>
        <end position="130"/>
    </location>
</feature>
<feature type="transmembrane region" description="Helical" evidence="4">
    <location>
        <begin position="174"/>
        <end position="191"/>
    </location>
</feature>
<feature type="transmembrane region" description="Helical" evidence="4">
    <location>
        <begin position="204"/>
        <end position="226"/>
    </location>
</feature>
<feature type="region of interest" description="Disordered" evidence="5">
    <location>
        <begin position="1"/>
        <end position="69"/>
    </location>
</feature>
<feature type="compositionally biased region" description="Basic and acidic residues" evidence="5">
    <location>
        <begin position="19"/>
        <end position="30"/>
    </location>
</feature>
<reference key="1">
    <citation type="journal article" date="2002" name="Nature">
        <title>The genome sequence of Schizosaccharomyces pombe.</title>
        <authorList>
            <person name="Wood V."/>
            <person name="Gwilliam R."/>
            <person name="Rajandream M.A."/>
            <person name="Lyne M.H."/>
            <person name="Lyne R."/>
            <person name="Stewart A."/>
            <person name="Sgouros J.G."/>
            <person name="Peat N."/>
            <person name="Hayles J."/>
            <person name="Baker S.G."/>
            <person name="Basham D."/>
            <person name="Bowman S."/>
            <person name="Brooks K."/>
            <person name="Brown D."/>
            <person name="Brown S."/>
            <person name="Chillingworth T."/>
            <person name="Churcher C.M."/>
            <person name="Collins M."/>
            <person name="Connor R."/>
            <person name="Cronin A."/>
            <person name="Davis P."/>
            <person name="Feltwell T."/>
            <person name="Fraser A."/>
            <person name="Gentles S."/>
            <person name="Goble A."/>
            <person name="Hamlin N."/>
            <person name="Harris D.E."/>
            <person name="Hidalgo J."/>
            <person name="Hodgson G."/>
            <person name="Holroyd S."/>
            <person name="Hornsby T."/>
            <person name="Howarth S."/>
            <person name="Huckle E.J."/>
            <person name="Hunt S."/>
            <person name="Jagels K."/>
            <person name="James K.D."/>
            <person name="Jones L."/>
            <person name="Jones M."/>
            <person name="Leather S."/>
            <person name="McDonald S."/>
            <person name="McLean J."/>
            <person name="Mooney P."/>
            <person name="Moule S."/>
            <person name="Mungall K.L."/>
            <person name="Murphy L.D."/>
            <person name="Niblett D."/>
            <person name="Odell C."/>
            <person name="Oliver K."/>
            <person name="O'Neil S."/>
            <person name="Pearson D."/>
            <person name="Quail M.A."/>
            <person name="Rabbinowitsch E."/>
            <person name="Rutherford K.M."/>
            <person name="Rutter S."/>
            <person name="Saunders D."/>
            <person name="Seeger K."/>
            <person name="Sharp S."/>
            <person name="Skelton J."/>
            <person name="Simmonds M.N."/>
            <person name="Squares R."/>
            <person name="Squares S."/>
            <person name="Stevens K."/>
            <person name="Taylor K."/>
            <person name="Taylor R.G."/>
            <person name="Tivey A."/>
            <person name="Walsh S.V."/>
            <person name="Warren T."/>
            <person name="Whitehead S."/>
            <person name="Woodward J.R."/>
            <person name="Volckaert G."/>
            <person name="Aert R."/>
            <person name="Robben J."/>
            <person name="Grymonprez B."/>
            <person name="Weltjens I."/>
            <person name="Vanstreels E."/>
            <person name="Rieger M."/>
            <person name="Schaefer M."/>
            <person name="Mueller-Auer S."/>
            <person name="Gabel C."/>
            <person name="Fuchs M."/>
            <person name="Duesterhoeft A."/>
            <person name="Fritzc C."/>
            <person name="Holzer E."/>
            <person name="Moestl D."/>
            <person name="Hilbert H."/>
            <person name="Borzym K."/>
            <person name="Langer I."/>
            <person name="Beck A."/>
            <person name="Lehrach H."/>
            <person name="Reinhardt R."/>
            <person name="Pohl T.M."/>
            <person name="Eger P."/>
            <person name="Zimmermann W."/>
            <person name="Wedler H."/>
            <person name="Wambutt R."/>
            <person name="Purnelle B."/>
            <person name="Goffeau A."/>
            <person name="Cadieu E."/>
            <person name="Dreano S."/>
            <person name="Gloux S."/>
            <person name="Lelaure V."/>
            <person name="Mottier S."/>
            <person name="Galibert F."/>
            <person name="Aves S.J."/>
            <person name="Xiang Z."/>
            <person name="Hunt C."/>
            <person name="Moore K."/>
            <person name="Hurst S.M."/>
            <person name="Lucas M."/>
            <person name="Rochet M."/>
            <person name="Gaillardin C."/>
            <person name="Tallada V.A."/>
            <person name="Garzon A."/>
            <person name="Thode G."/>
            <person name="Daga R.R."/>
            <person name="Cruzado L."/>
            <person name="Jimenez J."/>
            <person name="Sanchez M."/>
            <person name="del Rey F."/>
            <person name="Benito J."/>
            <person name="Dominguez A."/>
            <person name="Revuelta J.L."/>
            <person name="Moreno S."/>
            <person name="Armstrong J."/>
            <person name="Forsburg S.L."/>
            <person name="Cerutti L."/>
            <person name="Lowe T."/>
            <person name="McCombie W.R."/>
            <person name="Paulsen I."/>
            <person name="Potashkin J."/>
            <person name="Shpakovski G.V."/>
            <person name="Ussery D."/>
            <person name="Barrell B.G."/>
            <person name="Nurse P."/>
        </authorList>
    </citation>
    <scope>NUCLEOTIDE SEQUENCE [LARGE SCALE GENOMIC DNA]</scope>
    <source>
        <strain>972 / ATCC 24843</strain>
    </source>
</reference>
<gene>
    <name evidence="7" type="primary">wtf9</name>
    <name type="synonym">wtf2</name>
    <name evidence="7" type="ORF">SPCC970.11c</name>
</gene>
<evidence type="ECO:0000250" key="1">
    <source>
        <dbReference type="UniProtKB" id="A0A218N034"/>
    </source>
</evidence>
<evidence type="ECO:0000250" key="2">
    <source>
        <dbReference type="UniProtKB" id="A0A482ATU4"/>
    </source>
</evidence>
<evidence type="ECO:0000250" key="3">
    <source>
        <dbReference type="UniProtKB" id="O74420"/>
    </source>
</evidence>
<evidence type="ECO:0000255" key="4"/>
<evidence type="ECO:0000256" key="5">
    <source>
        <dbReference type="SAM" id="MobiDB-lite"/>
    </source>
</evidence>
<evidence type="ECO:0000305" key="6"/>
<evidence type="ECO:0000312" key="7">
    <source>
        <dbReference type="PomBase" id="SPCC970.11c"/>
    </source>
</evidence>
<accession>O74564</accession>